<keyword id="KW-0029">Amino-acid transport</keyword>
<keyword id="KW-0574">Periplasm</keyword>
<keyword id="KW-0614">Plasmid</keyword>
<keyword id="KW-1185">Reference proteome</keyword>
<keyword id="KW-0732">Signal</keyword>
<keyword id="KW-0813">Transport</keyword>
<sequence>MTHLKISKTAPAVARFLPAGRIASVAAALSLFLSAQLAGAVTLEEVKARGYITIAIANEMPGSYTDPNGEVKGSEADVARRVLEKLGIKPENIQWVVTTFGSLIPGLQANRFDMTAAGMAIRPERCEKVIYSEPNSSYGEGMLVIKGNPRNFHSYEDVAQQGKIAIMAGADQLRMMQALGVPNENIITIAANADAISAVATGRADAYAAAASTAADLAKKSDKVELATPFQDPVIDGKIQRSWGAFSFNKESADLRDKFNEALLEFRKTDEFKQLLLGYGYLPESIAAIPDKTTKELCSN</sequence>
<organism>
    <name type="scientific">Sinorhizobium fredii (strain NBRC 101917 / NGR234)</name>
    <dbReference type="NCBI Taxonomy" id="394"/>
    <lineage>
        <taxon>Bacteria</taxon>
        <taxon>Pseudomonadati</taxon>
        <taxon>Pseudomonadota</taxon>
        <taxon>Alphaproteobacteria</taxon>
        <taxon>Hyphomicrobiales</taxon>
        <taxon>Rhizobiaceae</taxon>
        <taxon>Sinorhizobium/Ensifer group</taxon>
        <taxon>Sinorhizobium</taxon>
    </lineage>
</organism>
<dbReference type="EMBL" id="U00090">
    <property type="protein sequence ID" value="AAB91858.1"/>
    <property type="molecule type" value="Genomic_DNA"/>
</dbReference>
<dbReference type="RefSeq" id="NP_444071.1">
    <property type="nucleotide sequence ID" value="NC_000914.2"/>
</dbReference>
<dbReference type="RefSeq" id="WP_010875192.1">
    <property type="nucleotide sequence ID" value="NC_000914.2"/>
</dbReference>
<dbReference type="SMR" id="P55659"/>
<dbReference type="KEGG" id="rhi:NGR_a01540"/>
<dbReference type="PATRIC" id="fig|394.7.peg.140"/>
<dbReference type="eggNOG" id="COG0834">
    <property type="taxonomic scope" value="Bacteria"/>
</dbReference>
<dbReference type="HOGENOM" id="CLU_019602_2_0_5"/>
<dbReference type="OrthoDB" id="9768183at2"/>
<dbReference type="Proteomes" id="UP000001054">
    <property type="component" value="Plasmid pNGR234a"/>
</dbReference>
<dbReference type="GO" id="GO:0042597">
    <property type="term" value="C:periplasmic space"/>
    <property type="evidence" value="ECO:0007669"/>
    <property type="project" value="UniProtKB-SubCell"/>
</dbReference>
<dbReference type="GO" id="GO:0033294">
    <property type="term" value="F:ectoine binding"/>
    <property type="evidence" value="ECO:0007669"/>
    <property type="project" value="InterPro"/>
</dbReference>
<dbReference type="GO" id="GO:0006865">
    <property type="term" value="P:amino acid transport"/>
    <property type="evidence" value="ECO:0007669"/>
    <property type="project" value="UniProtKB-KW"/>
</dbReference>
<dbReference type="GO" id="GO:0051470">
    <property type="term" value="P:ectoine transmembrane transport"/>
    <property type="evidence" value="ECO:0007669"/>
    <property type="project" value="InterPro"/>
</dbReference>
<dbReference type="CDD" id="cd01002">
    <property type="entry name" value="PBP2_Ehub_like"/>
    <property type="match status" value="1"/>
</dbReference>
<dbReference type="Gene3D" id="3.40.190.10">
    <property type="entry name" value="Periplasmic binding protein-like II"/>
    <property type="match status" value="2"/>
</dbReference>
<dbReference type="InterPro" id="IPR014337">
    <property type="entry name" value="Ectoine_EhuB"/>
</dbReference>
<dbReference type="InterPro" id="IPR001638">
    <property type="entry name" value="Solute-binding_3/MltF_N"/>
</dbReference>
<dbReference type="NCBIfam" id="TIGR02995">
    <property type="entry name" value="ectoine_ehuB"/>
    <property type="match status" value="1"/>
</dbReference>
<dbReference type="PANTHER" id="PTHR35936:SF17">
    <property type="entry name" value="ARGININE-BINDING EXTRACELLULAR PROTEIN ARTP"/>
    <property type="match status" value="1"/>
</dbReference>
<dbReference type="PANTHER" id="PTHR35936">
    <property type="entry name" value="MEMBRANE-BOUND LYTIC MUREIN TRANSGLYCOSYLASE F"/>
    <property type="match status" value="1"/>
</dbReference>
<dbReference type="Pfam" id="PF00497">
    <property type="entry name" value="SBP_bac_3"/>
    <property type="match status" value="1"/>
</dbReference>
<dbReference type="SMART" id="SM00062">
    <property type="entry name" value="PBPb"/>
    <property type="match status" value="1"/>
</dbReference>
<dbReference type="SUPFAM" id="SSF53850">
    <property type="entry name" value="Periplasmic binding protein-like II"/>
    <property type="match status" value="1"/>
</dbReference>
<evidence type="ECO:0000255" key="1"/>
<evidence type="ECO:0000305" key="2"/>
<reference key="1">
    <citation type="journal article" date="1997" name="Nature">
        <title>Molecular basis of symbiosis between Rhizobium and legumes.</title>
        <authorList>
            <person name="Freiberg C.A."/>
            <person name="Fellay R."/>
            <person name="Bairoch A."/>
            <person name="Broughton W.J."/>
            <person name="Rosenthal A."/>
            <person name="Perret X."/>
        </authorList>
    </citation>
    <scope>NUCLEOTIDE SEQUENCE [LARGE SCALE GENOMIC DNA]</scope>
    <source>
        <strain>NBRC 101917 / NGR234</strain>
    </source>
</reference>
<reference key="2">
    <citation type="journal article" date="2009" name="Appl. Environ. Microbiol.">
        <title>Rhizobium sp. strain NGR234 possesses a remarkable number of secretion systems.</title>
        <authorList>
            <person name="Schmeisser C."/>
            <person name="Liesegang H."/>
            <person name="Krysciak D."/>
            <person name="Bakkou N."/>
            <person name="Le Quere A."/>
            <person name="Wollherr A."/>
            <person name="Heinemeyer I."/>
            <person name="Morgenstern B."/>
            <person name="Pommerening-Roeser A."/>
            <person name="Flores M."/>
            <person name="Palacios R."/>
            <person name="Brenner S."/>
            <person name="Gottschalk G."/>
            <person name="Schmitz R.A."/>
            <person name="Broughton W.J."/>
            <person name="Perret X."/>
            <person name="Strittmatter A.W."/>
            <person name="Streit W.R."/>
        </authorList>
    </citation>
    <scope>NUCLEOTIDE SEQUENCE [LARGE SCALE GENOMIC DNA]</scope>
    <source>
        <strain>NBRC 101917 / NGR234</strain>
    </source>
</reference>
<gene>
    <name type="ordered locus">NGR_a01540</name>
    <name type="ORF">y4tE</name>
</gene>
<name>Y4TE_SINFN</name>
<proteinExistence type="inferred from homology"/>
<accession>P55659</accession>
<geneLocation type="plasmid">
    <name>sym pNGR234a</name>
</geneLocation>
<comment type="function">
    <text>Probably part of the binding-protein-dependent transport system y4tEFGH for an amino acid.</text>
</comment>
<comment type="subcellular location">
    <subcellularLocation>
        <location evidence="2">Periplasm</location>
    </subcellularLocation>
</comment>
<comment type="similarity">
    <text evidence="2">Belongs to the bacterial solute-binding protein 3 family.</text>
</comment>
<protein>
    <recommendedName>
        <fullName>Probable amino-acid ABC transporter periplasmic-binding protein y4tE</fullName>
    </recommendedName>
</protein>
<feature type="signal peptide" evidence="1">
    <location>
        <begin position="1"/>
        <end position="27"/>
    </location>
</feature>
<feature type="chain" id="PRO_0000031782" description="Probable amino-acid ABC transporter periplasmic-binding protein y4tE">
    <location>
        <begin position="28"/>
        <end position="300"/>
    </location>
</feature>